<comment type="function">
    <text evidence="1">Catalyzes the condensation of carbamoyl phosphate and aspartate to form carbamoyl aspartate and inorganic phosphate, the committed step in the de novo pyrimidine nucleotide biosynthesis pathway.</text>
</comment>
<comment type="catalytic activity">
    <reaction evidence="1">
        <text>carbamoyl phosphate + L-aspartate = N-carbamoyl-L-aspartate + phosphate + H(+)</text>
        <dbReference type="Rhea" id="RHEA:20013"/>
        <dbReference type="ChEBI" id="CHEBI:15378"/>
        <dbReference type="ChEBI" id="CHEBI:29991"/>
        <dbReference type="ChEBI" id="CHEBI:32814"/>
        <dbReference type="ChEBI" id="CHEBI:43474"/>
        <dbReference type="ChEBI" id="CHEBI:58228"/>
        <dbReference type="EC" id="2.1.3.2"/>
    </reaction>
</comment>
<comment type="pathway">
    <text evidence="1">Pyrimidine metabolism; UMP biosynthesis via de novo pathway; (S)-dihydroorotate from bicarbonate: step 2/3.</text>
</comment>
<comment type="subunit">
    <text evidence="1">Heterododecamer (2C3:3R2) of six catalytic PyrB chains organized as two trimers (C3), and six regulatory PyrI chains organized as three dimers (R2).</text>
</comment>
<comment type="similarity">
    <text evidence="1">Belongs to the aspartate/ornithine carbamoyltransferase superfamily. ATCase family.</text>
</comment>
<feature type="chain" id="PRO_0000301639" description="Aspartate carbamoyltransferase catalytic subunit">
    <location>
        <begin position="1"/>
        <end position="315"/>
    </location>
</feature>
<feature type="binding site" evidence="1">
    <location>
        <position position="65"/>
    </location>
    <ligand>
        <name>carbamoyl phosphate</name>
        <dbReference type="ChEBI" id="CHEBI:58228"/>
    </ligand>
</feature>
<feature type="binding site" evidence="1">
    <location>
        <position position="66"/>
    </location>
    <ligand>
        <name>carbamoyl phosphate</name>
        <dbReference type="ChEBI" id="CHEBI:58228"/>
    </ligand>
</feature>
<feature type="binding site" evidence="1">
    <location>
        <position position="93"/>
    </location>
    <ligand>
        <name>L-aspartate</name>
        <dbReference type="ChEBI" id="CHEBI:29991"/>
    </ligand>
</feature>
<feature type="binding site" evidence="1">
    <location>
        <position position="115"/>
    </location>
    <ligand>
        <name>carbamoyl phosphate</name>
        <dbReference type="ChEBI" id="CHEBI:58228"/>
    </ligand>
</feature>
<feature type="binding site" evidence="1">
    <location>
        <position position="145"/>
    </location>
    <ligand>
        <name>carbamoyl phosphate</name>
        <dbReference type="ChEBI" id="CHEBI:58228"/>
    </ligand>
</feature>
<feature type="binding site" evidence="1">
    <location>
        <position position="148"/>
    </location>
    <ligand>
        <name>carbamoyl phosphate</name>
        <dbReference type="ChEBI" id="CHEBI:58228"/>
    </ligand>
</feature>
<feature type="binding site" evidence="1">
    <location>
        <position position="179"/>
    </location>
    <ligand>
        <name>L-aspartate</name>
        <dbReference type="ChEBI" id="CHEBI:29991"/>
    </ligand>
</feature>
<feature type="binding site" evidence="1">
    <location>
        <position position="234"/>
    </location>
    <ligand>
        <name>L-aspartate</name>
        <dbReference type="ChEBI" id="CHEBI:29991"/>
    </ligand>
</feature>
<feature type="binding site" evidence="1">
    <location>
        <position position="275"/>
    </location>
    <ligand>
        <name>carbamoyl phosphate</name>
        <dbReference type="ChEBI" id="CHEBI:58228"/>
    </ligand>
</feature>
<feature type="binding site" evidence="1">
    <location>
        <position position="276"/>
    </location>
    <ligand>
        <name>carbamoyl phosphate</name>
        <dbReference type="ChEBI" id="CHEBI:58228"/>
    </ligand>
</feature>
<dbReference type="EC" id="2.1.3.2" evidence="1"/>
<dbReference type="EMBL" id="AM039952">
    <property type="protein sequence ID" value="CAJ24783.1"/>
    <property type="molecule type" value="Genomic_DNA"/>
</dbReference>
<dbReference type="RefSeq" id="WP_011348107.1">
    <property type="nucleotide sequence ID" value="NZ_CP017190.1"/>
</dbReference>
<dbReference type="SMR" id="Q3BR21"/>
<dbReference type="STRING" id="456327.BJD11_07525"/>
<dbReference type="KEGG" id="xcv:XCV3061"/>
<dbReference type="eggNOG" id="COG0540">
    <property type="taxonomic scope" value="Bacteria"/>
</dbReference>
<dbReference type="HOGENOM" id="CLU_043846_2_0_6"/>
<dbReference type="UniPathway" id="UPA00070">
    <property type="reaction ID" value="UER00116"/>
</dbReference>
<dbReference type="Proteomes" id="UP000007069">
    <property type="component" value="Chromosome"/>
</dbReference>
<dbReference type="GO" id="GO:0005829">
    <property type="term" value="C:cytosol"/>
    <property type="evidence" value="ECO:0007669"/>
    <property type="project" value="TreeGrafter"/>
</dbReference>
<dbReference type="GO" id="GO:0016597">
    <property type="term" value="F:amino acid binding"/>
    <property type="evidence" value="ECO:0007669"/>
    <property type="project" value="InterPro"/>
</dbReference>
<dbReference type="GO" id="GO:0004070">
    <property type="term" value="F:aspartate carbamoyltransferase activity"/>
    <property type="evidence" value="ECO:0007669"/>
    <property type="project" value="UniProtKB-UniRule"/>
</dbReference>
<dbReference type="GO" id="GO:0006207">
    <property type="term" value="P:'de novo' pyrimidine nucleobase biosynthetic process"/>
    <property type="evidence" value="ECO:0007669"/>
    <property type="project" value="InterPro"/>
</dbReference>
<dbReference type="GO" id="GO:0044205">
    <property type="term" value="P:'de novo' UMP biosynthetic process"/>
    <property type="evidence" value="ECO:0007669"/>
    <property type="project" value="UniProtKB-UniRule"/>
</dbReference>
<dbReference type="GO" id="GO:0006520">
    <property type="term" value="P:amino acid metabolic process"/>
    <property type="evidence" value="ECO:0007669"/>
    <property type="project" value="InterPro"/>
</dbReference>
<dbReference type="FunFam" id="3.40.50.1370:FF:000007">
    <property type="entry name" value="Aspartate carbamoyltransferase"/>
    <property type="match status" value="1"/>
</dbReference>
<dbReference type="FunFam" id="3.40.50.1370:FF:000019">
    <property type="entry name" value="Aspartate carbamoyltransferase"/>
    <property type="match status" value="1"/>
</dbReference>
<dbReference type="Gene3D" id="3.40.50.1370">
    <property type="entry name" value="Aspartate/ornithine carbamoyltransferase"/>
    <property type="match status" value="2"/>
</dbReference>
<dbReference type="HAMAP" id="MF_00001">
    <property type="entry name" value="Asp_carb_tr"/>
    <property type="match status" value="1"/>
</dbReference>
<dbReference type="InterPro" id="IPR006132">
    <property type="entry name" value="Asp/Orn_carbamoyltranf_P-bd"/>
</dbReference>
<dbReference type="InterPro" id="IPR006130">
    <property type="entry name" value="Asp/Orn_carbamoylTrfase"/>
</dbReference>
<dbReference type="InterPro" id="IPR036901">
    <property type="entry name" value="Asp/Orn_carbamoylTrfase_sf"/>
</dbReference>
<dbReference type="InterPro" id="IPR002082">
    <property type="entry name" value="Asp_carbamoyltransf"/>
</dbReference>
<dbReference type="InterPro" id="IPR006131">
    <property type="entry name" value="Asp_carbamoyltransf_Asp/Orn-bd"/>
</dbReference>
<dbReference type="NCBIfam" id="TIGR00670">
    <property type="entry name" value="asp_carb_tr"/>
    <property type="match status" value="1"/>
</dbReference>
<dbReference type="NCBIfam" id="NF002032">
    <property type="entry name" value="PRK00856.1"/>
    <property type="match status" value="1"/>
</dbReference>
<dbReference type="PANTHER" id="PTHR45753:SF6">
    <property type="entry name" value="ASPARTATE CARBAMOYLTRANSFERASE"/>
    <property type="match status" value="1"/>
</dbReference>
<dbReference type="PANTHER" id="PTHR45753">
    <property type="entry name" value="ORNITHINE CARBAMOYLTRANSFERASE, MITOCHONDRIAL"/>
    <property type="match status" value="1"/>
</dbReference>
<dbReference type="Pfam" id="PF00185">
    <property type="entry name" value="OTCace"/>
    <property type="match status" value="1"/>
</dbReference>
<dbReference type="Pfam" id="PF02729">
    <property type="entry name" value="OTCace_N"/>
    <property type="match status" value="1"/>
</dbReference>
<dbReference type="PRINTS" id="PR00100">
    <property type="entry name" value="AOTCASE"/>
</dbReference>
<dbReference type="PRINTS" id="PR00101">
    <property type="entry name" value="ATCASE"/>
</dbReference>
<dbReference type="SUPFAM" id="SSF53671">
    <property type="entry name" value="Aspartate/ornithine carbamoyltransferase"/>
    <property type="match status" value="1"/>
</dbReference>
<dbReference type="PROSITE" id="PS00097">
    <property type="entry name" value="CARBAMOYLTRANSFERASE"/>
    <property type="match status" value="1"/>
</dbReference>
<sequence length="315" mass="33666">MTTMQLDSDGRLRHLLTLEGLPRTTLLQLLDRAGQIRDAAVGRVGKRSVLAGTAVCTLFFEPSTRTRSSFHLAAQRLGADVLNFDASTSSTRKGETARDTLKNLEAMGVRGFVVRHPDDGAVEALATAAGEGTALINAGDGRSAHPTQGLLDMLTLRQAKGTDFSKLKVVIVGDVKHSRVARSDLHALRTLGAGEIRVCGPASLLPDDGILEGCVVGQDFDAMLEGADALMMLRLQRERMEEGLVPSLEQYHTEYGLTRERLARAGRDAAVLHPGPINRGVEITDEVADGAQSCVLRQVANGVAVRMAVLETLLG</sequence>
<proteinExistence type="inferred from homology"/>
<gene>
    <name evidence="1" type="primary">pyrB</name>
    <name type="ordered locus">XCV3061</name>
</gene>
<name>PYRB_XANE5</name>
<protein>
    <recommendedName>
        <fullName evidence="1">Aspartate carbamoyltransferase catalytic subunit</fullName>
        <ecNumber evidence="1">2.1.3.2</ecNumber>
    </recommendedName>
    <alternativeName>
        <fullName evidence="1">Aspartate transcarbamylase</fullName>
        <shortName evidence="1">ATCase</shortName>
    </alternativeName>
</protein>
<evidence type="ECO:0000255" key="1">
    <source>
        <dbReference type="HAMAP-Rule" id="MF_00001"/>
    </source>
</evidence>
<reference key="1">
    <citation type="journal article" date="2005" name="J. Bacteriol.">
        <title>Insights into genome plasticity and pathogenicity of the plant pathogenic Bacterium Xanthomonas campestris pv. vesicatoria revealed by the complete genome sequence.</title>
        <authorList>
            <person name="Thieme F."/>
            <person name="Koebnik R."/>
            <person name="Bekel T."/>
            <person name="Berger C."/>
            <person name="Boch J."/>
            <person name="Buettner D."/>
            <person name="Caldana C."/>
            <person name="Gaigalat L."/>
            <person name="Goesmann A."/>
            <person name="Kay S."/>
            <person name="Kirchner O."/>
            <person name="Lanz C."/>
            <person name="Linke B."/>
            <person name="McHardy A.C."/>
            <person name="Meyer F."/>
            <person name="Mittenhuber G."/>
            <person name="Nies D.H."/>
            <person name="Niesbach-Kloesgen U."/>
            <person name="Patschkowski T."/>
            <person name="Rueckert C."/>
            <person name="Rupp O."/>
            <person name="Schneiker S."/>
            <person name="Schuster S.C."/>
            <person name="Vorhoelter F.J."/>
            <person name="Weber E."/>
            <person name="Puehler A."/>
            <person name="Bonas U."/>
            <person name="Bartels D."/>
            <person name="Kaiser O."/>
        </authorList>
    </citation>
    <scope>NUCLEOTIDE SEQUENCE [LARGE SCALE GENOMIC DNA]</scope>
    <source>
        <strain>85-10</strain>
    </source>
</reference>
<organism>
    <name type="scientific">Xanthomonas euvesicatoria pv. vesicatoria (strain 85-10)</name>
    <name type="common">Xanthomonas campestris pv. vesicatoria</name>
    <dbReference type="NCBI Taxonomy" id="316273"/>
    <lineage>
        <taxon>Bacteria</taxon>
        <taxon>Pseudomonadati</taxon>
        <taxon>Pseudomonadota</taxon>
        <taxon>Gammaproteobacteria</taxon>
        <taxon>Lysobacterales</taxon>
        <taxon>Lysobacteraceae</taxon>
        <taxon>Xanthomonas</taxon>
    </lineage>
</organism>
<accession>Q3BR21</accession>
<keyword id="KW-0665">Pyrimidine biosynthesis</keyword>
<keyword id="KW-0808">Transferase</keyword>